<keyword id="KW-0053">Apoptosis</keyword>
<keyword id="KW-0130">Cell adhesion</keyword>
<keyword id="KW-1003">Cell membrane</keyword>
<keyword id="KW-1015">Disulfide bond</keyword>
<keyword id="KW-0325">Glycoprotein</keyword>
<keyword id="KW-0336">GPI-anchor</keyword>
<keyword id="KW-0393">Immunoglobulin domain</keyword>
<keyword id="KW-0449">Lipoprotein</keyword>
<keyword id="KW-0472">Membrane</keyword>
<keyword id="KW-0553">Oncogene</keyword>
<keyword id="KW-1185">Reference proteome</keyword>
<keyword id="KW-0677">Repeat</keyword>
<keyword id="KW-0732">Signal</keyword>
<feature type="signal peptide" evidence="3">
    <location>
        <begin position="1"/>
        <end position="34"/>
    </location>
</feature>
<feature type="chain" id="PRO_0000378506" description="Cell adhesion molecule CEACAM5">
    <location>
        <begin position="35"/>
        <end position="947"/>
    </location>
</feature>
<feature type="domain" description="Ig-like V-type 1" evidence="2 4">
    <location>
        <begin position="35"/>
        <end position="132"/>
    </location>
</feature>
<feature type="domain" description="Ig-like V-type 2" evidence="3">
    <location>
        <begin position="166"/>
        <end position="259"/>
    </location>
</feature>
<feature type="domain" description="Ig-like V-type 3" evidence="3">
    <location>
        <begin position="270"/>
        <end position="378"/>
    </location>
</feature>
<feature type="domain" description="Ig-like V-type 4" evidence="3">
    <location>
        <begin position="392"/>
        <end position="498"/>
    </location>
</feature>
<feature type="domain" description="Ig-like V-type 5" evidence="3">
    <location>
        <begin position="509"/>
        <end position="615"/>
    </location>
</feature>
<feature type="domain" description="Ig-like V-type 6" evidence="3">
    <location>
        <begin position="642"/>
        <end position="733"/>
    </location>
</feature>
<feature type="domain" description="Ig-like V-type 7" evidence="4">
    <location>
        <begin position="746"/>
        <end position="851"/>
    </location>
</feature>
<feature type="domain" description="Ig-like C2-type 1" evidence="4">
    <location>
        <begin position="859"/>
        <end position="943"/>
    </location>
</feature>
<feature type="glycosylation site" description="N-linked (GlcNAc...) asparagine" evidence="5">
    <location>
        <position position="57"/>
    </location>
</feature>
<feature type="glycosylation site" description="N-linked (GlcNAc...) asparagine" evidence="5">
    <location>
        <position position="103"/>
    </location>
</feature>
<feature type="glycosylation site" description="N-linked (GlcNAc...) asparagine" evidence="5">
    <location>
        <position position="110"/>
    </location>
</feature>
<feature type="glycosylation site" description="N-linked (GlcNAc...) asparagine" evidence="5">
    <location>
        <position position="207"/>
    </location>
</feature>
<feature type="glycosylation site" description="N-linked (GlcNAc...) asparagine" evidence="5">
    <location>
        <position position="224"/>
    </location>
</feature>
<feature type="glycosylation site" description="N-linked (GlcNAc...) asparagine" evidence="5">
    <location>
        <position position="341"/>
    </location>
</feature>
<feature type="glycosylation site" description="N-linked (GlcNAc...) asparagine" evidence="5">
    <location>
        <position position="461"/>
    </location>
</feature>
<feature type="glycosylation site" description="N-linked (GlcNAc...) asparagine" evidence="5">
    <location>
        <position position="472"/>
    </location>
</feature>
<feature type="glycosylation site" description="N-linked (GlcNAc...) asparagine" evidence="5">
    <location>
        <position position="578"/>
    </location>
</feature>
<feature type="glycosylation site" description="N-linked (GlcNAc...) asparagine" evidence="5">
    <location>
        <position position="698"/>
    </location>
</feature>
<feature type="glycosylation site" description="N-linked (GlcNAc...) asparagine" evidence="5">
    <location>
        <position position="709"/>
    </location>
</feature>
<feature type="glycosylation site" description="N-linked (GlcNAc...) asparagine" evidence="5">
    <location>
        <position position="816"/>
    </location>
</feature>
<feature type="glycosylation site" description="N-linked (GlcNAc...) asparagine" evidence="5">
    <location>
        <position position="823"/>
    </location>
</feature>
<feature type="disulfide bond" evidence="4">
    <location>
        <begin position="878"/>
        <end position="926"/>
    </location>
</feature>
<sequence length="947" mass="106270">MEASSVLPCKWCTHLQGLLLTASFLTCCHLPTTAQITIELEPPQVIEGENVLIRVNNLTENLITLAWFRGMRIKSPQIGQYTPATKVTVLGPGHSGRETLYSNGSLQIYNVTQEDIGFYSLRIINKHAEIVSITSIYLNVYSSLWTCEHPSPHAKLTIESVPPGISEGGSVLLLVKNLPQNLLSLFWYKGVIAVKKFEIARHIKATNSSVPGPAHTGRETVFSNGSLLLQEVMQSDTGFYTLRTMSTDLKDEVAHVQLYMDTYLLTCYHPLQVKIESLPQNVAVGKTVLLLVHNLPEDFQAFFWYKSAYRRDTYKIAEYKRAMDATILGSAYSSREFIYNNGSMLIIDVTEDDAGYFLLEILREDLKIEKAYIQLHVNSFVSNSKDSASTARLSIESVPPSIVEGGSVLLLVHNLPKNLQSLFWYKGMIAEKKSELIQHIIATSSSLPGPAHSGRETVYNNGSLLLQRVMQNDTQFYTLQTMDTDLKYEVAHVQLQLDTSLSTWYHPLQVKIESLPRNVAVGKSVLFLVHNFPEVFRAFSWYKPAYKSHTSKIVEYHRFTDSATVGAAYRGIEVIFTNGSMVMIDVTEDDAGFYMLEILREDFKVEKAYVQLHVNSFVPNSKVSVSTARLSIESVPPSIVGGESVLLLVHNLPKNLQSLFWYKGVIAEEKSELIQHIIATSSSLPGPAHSGRETVYSNGSLLLQRVMQNDTGFYTLLTMSTDLKDEIAHVQLQLDTSTCCSLLTSDQLIIVPVPRNIAVGKSVLLLVCNVPKDVQTIFWYKSVYRTDIFKIAEYSRSMESTIWGLAHSGKEMVYTNGSLLIQNVTEHDAGLYMLEILHKDYKLERAHVQVHVNNPVSWPFVRVTDTTVRVQSSVVFTCFSADPGVSIRWLFNKQSLQLTERMTLSPSKCQLSIDPVWREDAGKYQCEVSNPVSSKSSLPVRLAVIEE</sequence>
<dbReference type="EMBL" id="AK145976">
    <property type="protein sequence ID" value="BAE26799.1"/>
    <property type="molecule type" value="mRNA"/>
</dbReference>
<dbReference type="CCDS" id="CCDS20863.1"/>
<dbReference type="RefSeq" id="NP_082756.1">
    <property type="nucleotide sequence ID" value="NM_028480.2"/>
</dbReference>
<dbReference type="BioGRID" id="215864">
    <property type="interactions" value="1"/>
</dbReference>
<dbReference type="STRING" id="10090.ENSMUSP00000080582"/>
<dbReference type="GlyCosmos" id="Q3UKK2">
    <property type="glycosylation" value="13 sites, No reported glycans"/>
</dbReference>
<dbReference type="GlyGen" id="Q3UKK2">
    <property type="glycosylation" value="14 sites, 1 O-linked glycan (1 site)"/>
</dbReference>
<dbReference type="iPTMnet" id="Q3UKK2"/>
<dbReference type="PhosphoSitePlus" id="Q3UKK2"/>
<dbReference type="PaxDb" id="10090-ENSMUSP00000080582"/>
<dbReference type="PeptideAtlas" id="Q3UKK2"/>
<dbReference type="ProteomicsDB" id="281168"/>
<dbReference type="DNASU" id="73250"/>
<dbReference type="Ensembl" id="ENSMUST00000081907.8">
    <property type="protein sequence ID" value="ENSMUSP00000080582.7"/>
    <property type="gene ID" value="ENSMUSG00000008789.11"/>
</dbReference>
<dbReference type="GeneID" id="73250"/>
<dbReference type="KEGG" id="mmu:73250"/>
<dbReference type="UCSC" id="uc009fiz.1">
    <property type="organism name" value="mouse"/>
</dbReference>
<dbReference type="AGR" id="MGI:1920500"/>
<dbReference type="CTD" id="1048"/>
<dbReference type="MGI" id="MGI:1920500">
    <property type="gene designation" value="Ceacam5"/>
</dbReference>
<dbReference type="VEuPathDB" id="HostDB:ENSMUSG00000008789"/>
<dbReference type="eggNOG" id="ENOG502RXPD">
    <property type="taxonomic scope" value="Eukaryota"/>
</dbReference>
<dbReference type="GeneTree" id="ENSGT01100000263479"/>
<dbReference type="HOGENOM" id="CLU_310551_0_0_1"/>
<dbReference type="InParanoid" id="Q3UKK2"/>
<dbReference type="OrthoDB" id="6353782at2759"/>
<dbReference type="PhylomeDB" id="Q3UKK2"/>
<dbReference type="TreeFam" id="TF336859"/>
<dbReference type="BioGRID-ORCS" id="73250">
    <property type="hits" value="1 hit in 76 CRISPR screens"/>
</dbReference>
<dbReference type="ChiTaRS" id="Ceacam5">
    <property type="organism name" value="mouse"/>
</dbReference>
<dbReference type="PRO" id="PR:Q3UKK2"/>
<dbReference type="Proteomes" id="UP000000589">
    <property type="component" value="Chromosome 7"/>
</dbReference>
<dbReference type="RNAct" id="Q3UKK2">
    <property type="molecule type" value="protein"/>
</dbReference>
<dbReference type="Bgee" id="ENSMUSG00000008789">
    <property type="expression patterns" value="Expressed in placenta and 3 other cell types or tissues"/>
</dbReference>
<dbReference type="GO" id="GO:0016324">
    <property type="term" value="C:apical plasma membrane"/>
    <property type="evidence" value="ECO:0000250"/>
    <property type="project" value="UniProtKB"/>
</dbReference>
<dbReference type="GO" id="GO:0009986">
    <property type="term" value="C:cell surface"/>
    <property type="evidence" value="ECO:0000250"/>
    <property type="project" value="UniProtKB"/>
</dbReference>
<dbReference type="GO" id="GO:0016020">
    <property type="term" value="C:membrane"/>
    <property type="evidence" value="ECO:0000250"/>
    <property type="project" value="UniProtKB"/>
</dbReference>
<dbReference type="GO" id="GO:0098552">
    <property type="term" value="C:side of membrane"/>
    <property type="evidence" value="ECO:0007669"/>
    <property type="project" value="UniProtKB-KW"/>
</dbReference>
<dbReference type="GO" id="GO:0042802">
    <property type="term" value="F:identical protein binding"/>
    <property type="evidence" value="ECO:0000250"/>
    <property type="project" value="UniProtKB"/>
</dbReference>
<dbReference type="GO" id="GO:0006915">
    <property type="term" value="P:apoptotic process"/>
    <property type="evidence" value="ECO:0007669"/>
    <property type="project" value="UniProtKB-KW"/>
</dbReference>
<dbReference type="GO" id="GO:0007157">
    <property type="term" value="P:heterophilic cell-cell adhesion via plasma membrane cell adhesion molecules"/>
    <property type="evidence" value="ECO:0000250"/>
    <property type="project" value="UniProtKB"/>
</dbReference>
<dbReference type="GO" id="GO:0007156">
    <property type="term" value="P:homophilic cell adhesion via plasma membrane adhesion molecules"/>
    <property type="evidence" value="ECO:0000250"/>
    <property type="project" value="UniProtKB"/>
</dbReference>
<dbReference type="CDD" id="cd05740">
    <property type="entry name" value="IgI_hCEACAM_2_4_6_like"/>
    <property type="match status" value="1"/>
</dbReference>
<dbReference type="CDD" id="cd05774">
    <property type="entry name" value="IgV_CEACAM_D1"/>
    <property type="match status" value="6"/>
</dbReference>
<dbReference type="FunFam" id="2.60.40.10:FF:000340">
    <property type="entry name" value="Carcinoembryonic antigen-related cell adhesion molecule 1"/>
    <property type="match status" value="5"/>
</dbReference>
<dbReference type="FunFam" id="2.60.40.10:FF:000244">
    <property type="entry name" value="carcinoembryonic antigen-related cell adhesion molecule 16"/>
    <property type="match status" value="1"/>
</dbReference>
<dbReference type="Gene3D" id="2.60.40.10">
    <property type="entry name" value="Immunoglobulins"/>
    <property type="match status" value="8"/>
</dbReference>
<dbReference type="InterPro" id="IPR050831">
    <property type="entry name" value="CEA_cell_adhesion"/>
</dbReference>
<dbReference type="InterPro" id="IPR007110">
    <property type="entry name" value="Ig-like_dom"/>
</dbReference>
<dbReference type="InterPro" id="IPR036179">
    <property type="entry name" value="Ig-like_dom_sf"/>
</dbReference>
<dbReference type="InterPro" id="IPR013783">
    <property type="entry name" value="Ig-like_fold"/>
</dbReference>
<dbReference type="InterPro" id="IPR003599">
    <property type="entry name" value="Ig_sub"/>
</dbReference>
<dbReference type="InterPro" id="IPR003598">
    <property type="entry name" value="Ig_sub2"/>
</dbReference>
<dbReference type="InterPro" id="IPR013106">
    <property type="entry name" value="Ig_V-set"/>
</dbReference>
<dbReference type="InterPro" id="IPR013151">
    <property type="entry name" value="Immunoglobulin_dom"/>
</dbReference>
<dbReference type="PANTHER" id="PTHR44427:SF1">
    <property type="entry name" value="CARCINOEMBRYONIC ANTIGEN-RELATED CELL ADHESION MOLECULE 1"/>
    <property type="match status" value="1"/>
</dbReference>
<dbReference type="PANTHER" id="PTHR44427">
    <property type="entry name" value="CARCINOEMBRYONIC ANTIGEN-RELATED CELL ADHESION MOLECULE 19"/>
    <property type="match status" value="1"/>
</dbReference>
<dbReference type="Pfam" id="PF00047">
    <property type="entry name" value="ig"/>
    <property type="match status" value="1"/>
</dbReference>
<dbReference type="Pfam" id="PF07686">
    <property type="entry name" value="V-set"/>
    <property type="match status" value="7"/>
</dbReference>
<dbReference type="SMART" id="SM00409">
    <property type="entry name" value="IG"/>
    <property type="match status" value="8"/>
</dbReference>
<dbReference type="SMART" id="SM00408">
    <property type="entry name" value="IGc2"/>
    <property type="match status" value="1"/>
</dbReference>
<dbReference type="SUPFAM" id="SSF48726">
    <property type="entry name" value="Immunoglobulin"/>
    <property type="match status" value="8"/>
</dbReference>
<dbReference type="PROSITE" id="PS50835">
    <property type="entry name" value="IG_LIKE"/>
    <property type="match status" value="2"/>
</dbReference>
<protein>
    <recommendedName>
        <fullName evidence="6">Cell adhesion molecule CEACAM5</fullName>
    </recommendedName>
    <alternativeName>
        <fullName>Carcinoembryonic antigen-related cell adhesion molecule 5</fullName>
        <shortName evidence="7">CEA cell adhesion molecule 5</shortName>
    </alternativeName>
    <alternativeName>
        <fullName>Pregnancy-specific glycoprotein 30</fullName>
    </alternativeName>
</protein>
<comment type="function">
    <text evidence="1">Cell surface glycoprotein that plays a role in cell adhesion, intracellular signaling and tumor progression. Mediates homophilic and heterophilic cell adhesion with other carcinoembryonic antigen-related cell adhesion molecules, such as CEACAM6. Plays a role as an oncogene by promoting tumor progression; induces resistance to anoikis of colorectal carcinoma cells.</text>
</comment>
<comment type="subunit">
    <text evidence="1">Homodimer.</text>
</comment>
<comment type="subcellular location">
    <subcellularLocation>
        <location evidence="1">Cell membrane</location>
        <topology evidence="1">Lipid-anchor</topology>
        <topology evidence="1">GPI-anchor</topology>
    </subcellularLocation>
    <subcellularLocation>
        <location evidence="1">Apical cell membrane</location>
    </subcellularLocation>
    <subcellularLocation>
        <location evidence="1">Cell surface</location>
    </subcellularLocation>
    <text evidence="1">Localized to the apical glycocalyx surface.</text>
</comment>
<comment type="similarity">
    <text evidence="6">Belongs to the immunoglobulin superfamily. CEA family.</text>
</comment>
<reference key="1">
    <citation type="journal article" date="2005" name="Science">
        <title>The transcriptional landscape of the mammalian genome.</title>
        <authorList>
            <person name="Carninci P."/>
            <person name="Kasukawa T."/>
            <person name="Katayama S."/>
            <person name="Gough J."/>
            <person name="Frith M.C."/>
            <person name="Maeda N."/>
            <person name="Oyama R."/>
            <person name="Ravasi T."/>
            <person name="Lenhard B."/>
            <person name="Wells C."/>
            <person name="Kodzius R."/>
            <person name="Shimokawa K."/>
            <person name="Bajic V.B."/>
            <person name="Brenner S.E."/>
            <person name="Batalov S."/>
            <person name="Forrest A.R."/>
            <person name="Zavolan M."/>
            <person name="Davis M.J."/>
            <person name="Wilming L.G."/>
            <person name="Aidinis V."/>
            <person name="Allen J.E."/>
            <person name="Ambesi-Impiombato A."/>
            <person name="Apweiler R."/>
            <person name="Aturaliya R.N."/>
            <person name="Bailey T.L."/>
            <person name="Bansal M."/>
            <person name="Baxter L."/>
            <person name="Beisel K.W."/>
            <person name="Bersano T."/>
            <person name="Bono H."/>
            <person name="Chalk A.M."/>
            <person name="Chiu K.P."/>
            <person name="Choudhary V."/>
            <person name="Christoffels A."/>
            <person name="Clutterbuck D.R."/>
            <person name="Crowe M.L."/>
            <person name="Dalla E."/>
            <person name="Dalrymple B.P."/>
            <person name="de Bono B."/>
            <person name="Della Gatta G."/>
            <person name="di Bernardo D."/>
            <person name="Down T."/>
            <person name="Engstrom P."/>
            <person name="Fagiolini M."/>
            <person name="Faulkner G."/>
            <person name="Fletcher C.F."/>
            <person name="Fukushima T."/>
            <person name="Furuno M."/>
            <person name="Futaki S."/>
            <person name="Gariboldi M."/>
            <person name="Georgii-Hemming P."/>
            <person name="Gingeras T.R."/>
            <person name="Gojobori T."/>
            <person name="Green R.E."/>
            <person name="Gustincich S."/>
            <person name="Harbers M."/>
            <person name="Hayashi Y."/>
            <person name="Hensch T.K."/>
            <person name="Hirokawa N."/>
            <person name="Hill D."/>
            <person name="Huminiecki L."/>
            <person name="Iacono M."/>
            <person name="Ikeo K."/>
            <person name="Iwama A."/>
            <person name="Ishikawa T."/>
            <person name="Jakt M."/>
            <person name="Kanapin A."/>
            <person name="Katoh M."/>
            <person name="Kawasawa Y."/>
            <person name="Kelso J."/>
            <person name="Kitamura H."/>
            <person name="Kitano H."/>
            <person name="Kollias G."/>
            <person name="Krishnan S.P."/>
            <person name="Kruger A."/>
            <person name="Kummerfeld S.K."/>
            <person name="Kurochkin I.V."/>
            <person name="Lareau L.F."/>
            <person name="Lazarevic D."/>
            <person name="Lipovich L."/>
            <person name="Liu J."/>
            <person name="Liuni S."/>
            <person name="McWilliam S."/>
            <person name="Madan Babu M."/>
            <person name="Madera M."/>
            <person name="Marchionni L."/>
            <person name="Matsuda H."/>
            <person name="Matsuzawa S."/>
            <person name="Miki H."/>
            <person name="Mignone F."/>
            <person name="Miyake S."/>
            <person name="Morris K."/>
            <person name="Mottagui-Tabar S."/>
            <person name="Mulder N."/>
            <person name="Nakano N."/>
            <person name="Nakauchi H."/>
            <person name="Ng P."/>
            <person name="Nilsson R."/>
            <person name="Nishiguchi S."/>
            <person name="Nishikawa S."/>
            <person name="Nori F."/>
            <person name="Ohara O."/>
            <person name="Okazaki Y."/>
            <person name="Orlando V."/>
            <person name="Pang K.C."/>
            <person name="Pavan W.J."/>
            <person name="Pavesi G."/>
            <person name="Pesole G."/>
            <person name="Petrovsky N."/>
            <person name="Piazza S."/>
            <person name="Reed J."/>
            <person name="Reid J.F."/>
            <person name="Ring B.Z."/>
            <person name="Ringwald M."/>
            <person name="Rost B."/>
            <person name="Ruan Y."/>
            <person name="Salzberg S.L."/>
            <person name="Sandelin A."/>
            <person name="Schneider C."/>
            <person name="Schoenbach C."/>
            <person name="Sekiguchi K."/>
            <person name="Semple C.A."/>
            <person name="Seno S."/>
            <person name="Sessa L."/>
            <person name="Sheng Y."/>
            <person name="Shibata Y."/>
            <person name="Shimada H."/>
            <person name="Shimada K."/>
            <person name="Silva D."/>
            <person name="Sinclair B."/>
            <person name="Sperling S."/>
            <person name="Stupka E."/>
            <person name="Sugiura K."/>
            <person name="Sultana R."/>
            <person name="Takenaka Y."/>
            <person name="Taki K."/>
            <person name="Tammoja K."/>
            <person name="Tan S.L."/>
            <person name="Tang S."/>
            <person name="Taylor M.S."/>
            <person name="Tegner J."/>
            <person name="Teichmann S.A."/>
            <person name="Ueda H.R."/>
            <person name="van Nimwegen E."/>
            <person name="Verardo R."/>
            <person name="Wei C.L."/>
            <person name="Yagi K."/>
            <person name="Yamanishi H."/>
            <person name="Zabarovsky E."/>
            <person name="Zhu S."/>
            <person name="Zimmer A."/>
            <person name="Hide W."/>
            <person name="Bult C."/>
            <person name="Grimmond S.M."/>
            <person name="Teasdale R.D."/>
            <person name="Liu E.T."/>
            <person name="Brusic V."/>
            <person name="Quackenbush J."/>
            <person name="Wahlestedt C."/>
            <person name="Mattick J.S."/>
            <person name="Hume D.A."/>
            <person name="Kai C."/>
            <person name="Sasaki D."/>
            <person name="Tomaru Y."/>
            <person name="Fukuda S."/>
            <person name="Kanamori-Katayama M."/>
            <person name="Suzuki M."/>
            <person name="Aoki J."/>
            <person name="Arakawa T."/>
            <person name="Iida J."/>
            <person name="Imamura K."/>
            <person name="Itoh M."/>
            <person name="Kato T."/>
            <person name="Kawaji H."/>
            <person name="Kawagashira N."/>
            <person name="Kawashima T."/>
            <person name="Kojima M."/>
            <person name="Kondo S."/>
            <person name="Konno H."/>
            <person name="Nakano K."/>
            <person name="Ninomiya N."/>
            <person name="Nishio T."/>
            <person name="Okada M."/>
            <person name="Plessy C."/>
            <person name="Shibata K."/>
            <person name="Shiraki T."/>
            <person name="Suzuki S."/>
            <person name="Tagami M."/>
            <person name="Waki K."/>
            <person name="Watahiki A."/>
            <person name="Okamura-Oho Y."/>
            <person name="Suzuki H."/>
            <person name="Kawai J."/>
            <person name="Hayashizaki Y."/>
        </authorList>
    </citation>
    <scope>NUCLEOTIDE SEQUENCE [LARGE SCALE MRNA]</scope>
    <source>
        <strain>C57BL/6J</strain>
        <tissue>Placenta</tissue>
    </source>
</reference>
<reference key="2">
    <citation type="journal article" date="2005" name="BMC Genomics">
        <title>Structure and evolution of the mouse pregnancy-specific glycoprotein (Psg) gene locus.</title>
        <authorList>
            <person name="McLellan A.S."/>
            <person name="Fischer B."/>
            <person name="Dveksler G."/>
            <person name="Hori T."/>
            <person name="Wynne F."/>
            <person name="Ball M."/>
            <person name="Okumura K."/>
            <person name="Moore T."/>
            <person name="Zimmermann W."/>
        </authorList>
    </citation>
    <scope>GENE FAMILY</scope>
</reference>
<name>CEAM5_MOUSE</name>
<evidence type="ECO:0000250" key="1">
    <source>
        <dbReference type="UniProtKB" id="P06731"/>
    </source>
</evidence>
<evidence type="ECO:0000250" key="2">
    <source>
        <dbReference type="UniProtKB" id="P31997"/>
    </source>
</evidence>
<evidence type="ECO:0000255" key="3"/>
<evidence type="ECO:0000255" key="4">
    <source>
        <dbReference type="PROSITE-ProRule" id="PRU00114"/>
    </source>
</evidence>
<evidence type="ECO:0000255" key="5">
    <source>
        <dbReference type="PROSITE-ProRule" id="PRU00498"/>
    </source>
</evidence>
<evidence type="ECO:0000305" key="6"/>
<evidence type="ECO:0000312" key="7">
    <source>
        <dbReference type="MGI" id="MGI:1920500"/>
    </source>
</evidence>
<organism>
    <name type="scientific">Mus musculus</name>
    <name type="common">Mouse</name>
    <dbReference type="NCBI Taxonomy" id="10090"/>
    <lineage>
        <taxon>Eukaryota</taxon>
        <taxon>Metazoa</taxon>
        <taxon>Chordata</taxon>
        <taxon>Craniata</taxon>
        <taxon>Vertebrata</taxon>
        <taxon>Euteleostomi</taxon>
        <taxon>Mammalia</taxon>
        <taxon>Eutheria</taxon>
        <taxon>Euarchontoglires</taxon>
        <taxon>Glires</taxon>
        <taxon>Rodentia</taxon>
        <taxon>Myomorpha</taxon>
        <taxon>Muroidea</taxon>
        <taxon>Muridae</taxon>
        <taxon>Murinae</taxon>
        <taxon>Mus</taxon>
        <taxon>Mus</taxon>
    </lineage>
</organism>
<proteinExistence type="evidence at transcript level"/>
<gene>
    <name evidence="7" type="primary">Ceacam5</name>
    <name type="synonym">Psg30</name>
</gene>
<accession>Q3UKK2</accession>